<reference key="1">
    <citation type="journal article" date="2009" name="Genome Res.">
        <title>Newly introduced genomic prophage islands are critical determinants of in vivo competitiveness in the Liverpool epidemic strain of Pseudomonas aeruginosa.</title>
        <authorList>
            <person name="Winstanley C."/>
            <person name="Langille M.G.I."/>
            <person name="Fothergill J.L."/>
            <person name="Kukavica-Ibrulj I."/>
            <person name="Paradis-Bleau C."/>
            <person name="Sanschagrin F."/>
            <person name="Thomson N.R."/>
            <person name="Winsor G.L."/>
            <person name="Quail M.A."/>
            <person name="Lennard N."/>
            <person name="Bignell A."/>
            <person name="Clarke L."/>
            <person name="Seeger K."/>
            <person name="Saunders D."/>
            <person name="Harris D."/>
            <person name="Parkhill J."/>
            <person name="Hancock R.E.W."/>
            <person name="Brinkman F.S.L."/>
            <person name="Levesque R.C."/>
        </authorList>
    </citation>
    <scope>NUCLEOTIDE SEQUENCE [LARGE SCALE GENOMIC DNA]</scope>
    <source>
        <strain>LESB58</strain>
    </source>
</reference>
<dbReference type="EC" id="2.4.99.17" evidence="1"/>
<dbReference type="EMBL" id="FM209186">
    <property type="protein sequence ID" value="CAW25877.1"/>
    <property type="molecule type" value="Genomic_DNA"/>
</dbReference>
<dbReference type="RefSeq" id="WP_003143120.1">
    <property type="nucleotide sequence ID" value="NC_011770.1"/>
</dbReference>
<dbReference type="SMR" id="B7UVU3"/>
<dbReference type="KEGG" id="pag:PLES_11501"/>
<dbReference type="HOGENOM" id="CLU_039110_1_0_6"/>
<dbReference type="UniPathway" id="UPA00392"/>
<dbReference type="GO" id="GO:0005737">
    <property type="term" value="C:cytoplasm"/>
    <property type="evidence" value="ECO:0007669"/>
    <property type="project" value="UniProtKB-SubCell"/>
</dbReference>
<dbReference type="GO" id="GO:0051075">
    <property type="term" value="F:S-adenosylmethionine:tRNA ribosyltransferase-isomerase activity"/>
    <property type="evidence" value="ECO:0007669"/>
    <property type="project" value="UniProtKB-EC"/>
</dbReference>
<dbReference type="GO" id="GO:0008616">
    <property type="term" value="P:queuosine biosynthetic process"/>
    <property type="evidence" value="ECO:0007669"/>
    <property type="project" value="UniProtKB-UniRule"/>
</dbReference>
<dbReference type="GO" id="GO:0002099">
    <property type="term" value="P:tRNA wobble guanine modification"/>
    <property type="evidence" value="ECO:0007669"/>
    <property type="project" value="TreeGrafter"/>
</dbReference>
<dbReference type="FunFam" id="2.40.10.240:FF:000001">
    <property type="entry name" value="S-adenosylmethionine:tRNA ribosyltransferase-isomerase"/>
    <property type="match status" value="1"/>
</dbReference>
<dbReference type="FunFam" id="3.40.1780.10:FF:000001">
    <property type="entry name" value="S-adenosylmethionine:tRNA ribosyltransferase-isomerase"/>
    <property type="match status" value="1"/>
</dbReference>
<dbReference type="Gene3D" id="2.40.10.240">
    <property type="entry name" value="QueA-like"/>
    <property type="match status" value="1"/>
</dbReference>
<dbReference type="Gene3D" id="3.40.1780.10">
    <property type="entry name" value="QueA-like"/>
    <property type="match status" value="1"/>
</dbReference>
<dbReference type="HAMAP" id="MF_00113">
    <property type="entry name" value="QueA"/>
    <property type="match status" value="1"/>
</dbReference>
<dbReference type="InterPro" id="IPR003699">
    <property type="entry name" value="QueA"/>
</dbReference>
<dbReference type="InterPro" id="IPR042118">
    <property type="entry name" value="QueA_dom1"/>
</dbReference>
<dbReference type="InterPro" id="IPR042119">
    <property type="entry name" value="QueA_dom2"/>
</dbReference>
<dbReference type="InterPro" id="IPR036100">
    <property type="entry name" value="QueA_sf"/>
</dbReference>
<dbReference type="NCBIfam" id="NF001140">
    <property type="entry name" value="PRK00147.1"/>
    <property type="match status" value="1"/>
</dbReference>
<dbReference type="NCBIfam" id="TIGR00113">
    <property type="entry name" value="queA"/>
    <property type="match status" value="1"/>
</dbReference>
<dbReference type="PANTHER" id="PTHR30307">
    <property type="entry name" value="S-ADENOSYLMETHIONINE:TRNA RIBOSYLTRANSFERASE-ISOMERASE"/>
    <property type="match status" value="1"/>
</dbReference>
<dbReference type="PANTHER" id="PTHR30307:SF0">
    <property type="entry name" value="S-ADENOSYLMETHIONINE:TRNA RIBOSYLTRANSFERASE-ISOMERASE"/>
    <property type="match status" value="1"/>
</dbReference>
<dbReference type="Pfam" id="PF02547">
    <property type="entry name" value="Queuosine_synth"/>
    <property type="match status" value="1"/>
</dbReference>
<dbReference type="SUPFAM" id="SSF111337">
    <property type="entry name" value="QueA-like"/>
    <property type="match status" value="1"/>
</dbReference>
<feature type="chain" id="PRO_1000117535" description="S-adenosylmethionine:tRNA ribosyltransferase-isomerase">
    <location>
        <begin position="1"/>
        <end position="347"/>
    </location>
</feature>
<name>QUEA_PSEA8</name>
<sequence length="347" mass="38139">MRVADFHFDLPEALIARHPLPERRASRLLALDGPTGTLAHRQFADLLDYLRPGDLMVFNNTRVIPARLFGQKESGGKLEVLVERVLDQDRVLAHIRASKAPKPGTRILVEGGGSAEMLQRHDALFELAFAEPVLPLLERVGHMPLPPYIDRPDDAADRERYQTVYAQRAGAVAAPTAGLHFDEALLEAIRAKGVDTAFVTLHVGAGTFQPVRVERIEDHVMHREWLEVGQDVVDAVSVCRARGGRVVAVGTTSVRSLESAARDGELKPFSGDTDIFIYPGRPFHVVDALVTNFHLPESTLLMLVSAFAGYPETMAAYAAAVAQGYRFFSYGDAMFITRNPAPRGPED</sequence>
<gene>
    <name evidence="1" type="primary">queA</name>
    <name type="ordered locus">PLES_11501</name>
</gene>
<organism>
    <name type="scientific">Pseudomonas aeruginosa (strain LESB58)</name>
    <dbReference type="NCBI Taxonomy" id="557722"/>
    <lineage>
        <taxon>Bacteria</taxon>
        <taxon>Pseudomonadati</taxon>
        <taxon>Pseudomonadota</taxon>
        <taxon>Gammaproteobacteria</taxon>
        <taxon>Pseudomonadales</taxon>
        <taxon>Pseudomonadaceae</taxon>
        <taxon>Pseudomonas</taxon>
    </lineage>
</organism>
<comment type="function">
    <text evidence="1">Transfers and isomerizes the ribose moiety from AdoMet to the 7-aminomethyl group of 7-deazaguanine (preQ1-tRNA) to give epoxyqueuosine (oQ-tRNA).</text>
</comment>
<comment type="catalytic activity">
    <reaction evidence="1">
        <text>7-aminomethyl-7-carbaguanosine(34) in tRNA + S-adenosyl-L-methionine = epoxyqueuosine(34) in tRNA + adenine + L-methionine + 2 H(+)</text>
        <dbReference type="Rhea" id="RHEA:32155"/>
        <dbReference type="Rhea" id="RHEA-COMP:10342"/>
        <dbReference type="Rhea" id="RHEA-COMP:18582"/>
        <dbReference type="ChEBI" id="CHEBI:15378"/>
        <dbReference type="ChEBI" id="CHEBI:16708"/>
        <dbReference type="ChEBI" id="CHEBI:57844"/>
        <dbReference type="ChEBI" id="CHEBI:59789"/>
        <dbReference type="ChEBI" id="CHEBI:82833"/>
        <dbReference type="ChEBI" id="CHEBI:194443"/>
        <dbReference type="EC" id="2.4.99.17"/>
    </reaction>
</comment>
<comment type="pathway">
    <text evidence="1">tRNA modification; tRNA-queuosine biosynthesis.</text>
</comment>
<comment type="subunit">
    <text evidence="1">Monomer.</text>
</comment>
<comment type="subcellular location">
    <subcellularLocation>
        <location evidence="1">Cytoplasm</location>
    </subcellularLocation>
</comment>
<comment type="similarity">
    <text evidence="1">Belongs to the QueA family.</text>
</comment>
<accession>B7UVU3</accession>
<protein>
    <recommendedName>
        <fullName evidence="1">S-adenosylmethionine:tRNA ribosyltransferase-isomerase</fullName>
        <ecNumber evidence="1">2.4.99.17</ecNumber>
    </recommendedName>
    <alternativeName>
        <fullName evidence="1">Queuosine biosynthesis protein QueA</fullName>
    </alternativeName>
</protein>
<evidence type="ECO:0000255" key="1">
    <source>
        <dbReference type="HAMAP-Rule" id="MF_00113"/>
    </source>
</evidence>
<keyword id="KW-0963">Cytoplasm</keyword>
<keyword id="KW-0671">Queuosine biosynthesis</keyword>
<keyword id="KW-0949">S-adenosyl-L-methionine</keyword>
<keyword id="KW-0808">Transferase</keyword>
<proteinExistence type="inferred from homology"/>